<protein>
    <recommendedName>
        <fullName evidence="1">ATP synthase subunit beta, chloroplastic</fullName>
        <ecNumber evidence="1">7.1.2.2</ecNumber>
    </recommendedName>
    <alternativeName>
        <fullName evidence="1">ATP synthase F1 sector subunit beta</fullName>
    </alternativeName>
    <alternativeName>
        <fullName evidence="1">F-ATPase subunit beta</fullName>
    </alternativeName>
</protein>
<name>ATPB_NYMAL</name>
<geneLocation type="chloroplast"/>
<accession>Q6EW72</accession>
<feature type="chain" id="PRO_0000254500" description="ATP synthase subunit beta, chloroplastic">
    <location>
        <begin position="1"/>
        <end position="498"/>
    </location>
</feature>
<feature type="binding site" evidence="1">
    <location>
        <begin position="172"/>
        <end position="179"/>
    </location>
    <ligand>
        <name>ATP</name>
        <dbReference type="ChEBI" id="CHEBI:30616"/>
    </ligand>
</feature>
<gene>
    <name evidence="1" type="primary">atpB</name>
</gene>
<evidence type="ECO:0000255" key="1">
    <source>
        <dbReference type="HAMAP-Rule" id="MF_01347"/>
    </source>
</evidence>
<reference key="1">
    <citation type="journal article" date="2004" name="Mol. Biol. Evol.">
        <title>The chloroplast genome of Nymphaea alba: whole-genome analyses and the problem of identifying the most basal angiosperm.</title>
        <authorList>
            <person name="Goremykin V.V."/>
            <person name="Hirsch-Ernst K.I."/>
            <person name="Woelfl S."/>
            <person name="Hellwig F.H."/>
        </authorList>
    </citation>
    <scope>NUCLEOTIDE SEQUENCE [LARGE SCALE GENOMIC DNA]</scope>
</reference>
<dbReference type="EC" id="7.1.2.2" evidence="1"/>
<dbReference type="EMBL" id="AJ627251">
    <property type="protein sequence ID" value="CAF28600.1"/>
    <property type="molecule type" value="Genomic_DNA"/>
</dbReference>
<dbReference type="RefSeq" id="YP_053162.1">
    <property type="nucleotide sequence ID" value="NC_006050.1"/>
</dbReference>
<dbReference type="SMR" id="Q6EW72"/>
<dbReference type="GeneID" id="2896263"/>
<dbReference type="GO" id="GO:0009535">
    <property type="term" value="C:chloroplast thylakoid membrane"/>
    <property type="evidence" value="ECO:0007669"/>
    <property type="project" value="UniProtKB-SubCell"/>
</dbReference>
<dbReference type="GO" id="GO:0005739">
    <property type="term" value="C:mitochondrion"/>
    <property type="evidence" value="ECO:0007669"/>
    <property type="project" value="GOC"/>
</dbReference>
<dbReference type="GO" id="GO:0045259">
    <property type="term" value="C:proton-transporting ATP synthase complex"/>
    <property type="evidence" value="ECO:0007669"/>
    <property type="project" value="UniProtKB-KW"/>
</dbReference>
<dbReference type="GO" id="GO:0005524">
    <property type="term" value="F:ATP binding"/>
    <property type="evidence" value="ECO:0007669"/>
    <property type="project" value="UniProtKB-UniRule"/>
</dbReference>
<dbReference type="GO" id="GO:0016887">
    <property type="term" value="F:ATP hydrolysis activity"/>
    <property type="evidence" value="ECO:0007669"/>
    <property type="project" value="InterPro"/>
</dbReference>
<dbReference type="GO" id="GO:0046933">
    <property type="term" value="F:proton-transporting ATP synthase activity, rotational mechanism"/>
    <property type="evidence" value="ECO:0007669"/>
    <property type="project" value="UniProtKB-UniRule"/>
</dbReference>
<dbReference type="GO" id="GO:0042776">
    <property type="term" value="P:proton motive force-driven mitochondrial ATP synthesis"/>
    <property type="evidence" value="ECO:0007669"/>
    <property type="project" value="TreeGrafter"/>
</dbReference>
<dbReference type="CDD" id="cd18110">
    <property type="entry name" value="ATP-synt_F1_beta_C"/>
    <property type="match status" value="1"/>
</dbReference>
<dbReference type="CDD" id="cd18115">
    <property type="entry name" value="ATP-synt_F1_beta_N"/>
    <property type="match status" value="1"/>
</dbReference>
<dbReference type="CDD" id="cd01133">
    <property type="entry name" value="F1-ATPase_beta_CD"/>
    <property type="match status" value="1"/>
</dbReference>
<dbReference type="FunFam" id="1.10.1140.10:FF:000001">
    <property type="entry name" value="ATP synthase subunit beta"/>
    <property type="match status" value="1"/>
</dbReference>
<dbReference type="FunFam" id="3.40.50.12240:FF:000006">
    <property type="entry name" value="ATP synthase subunit beta"/>
    <property type="match status" value="1"/>
</dbReference>
<dbReference type="FunFam" id="3.40.50.300:FF:000004">
    <property type="entry name" value="ATP synthase subunit beta"/>
    <property type="match status" value="1"/>
</dbReference>
<dbReference type="FunFam" id="2.40.10.170:FF:000002">
    <property type="entry name" value="ATP synthase subunit beta, chloroplastic"/>
    <property type="match status" value="1"/>
</dbReference>
<dbReference type="Gene3D" id="2.40.10.170">
    <property type="match status" value="1"/>
</dbReference>
<dbReference type="Gene3D" id="1.10.1140.10">
    <property type="entry name" value="Bovine Mitochondrial F1-atpase, Atp Synthase Beta Chain, Chain D, domain 3"/>
    <property type="match status" value="1"/>
</dbReference>
<dbReference type="Gene3D" id="3.40.50.300">
    <property type="entry name" value="P-loop containing nucleotide triphosphate hydrolases"/>
    <property type="match status" value="1"/>
</dbReference>
<dbReference type="HAMAP" id="MF_01347">
    <property type="entry name" value="ATP_synth_beta_bact"/>
    <property type="match status" value="1"/>
</dbReference>
<dbReference type="InterPro" id="IPR003593">
    <property type="entry name" value="AAA+_ATPase"/>
</dbReference>
<dbReference type="InterPro" id="IPR055190">
    <property type="entry name" value="ATP-synt_VA_C"/>
</dbReference>
<dbReference type="InterPro" id="IPR005722">
    <property type="entry name" value="ATP_synth_F1_bsu"/>
</dbReference>
<dbReference type="InterPro" id="IPR020003">
    <property type="entry name" value="ATPase_a/bsu_AS"/>
</dbReference>
<dbReference type="InterPro" id="IPR050053">
    <property type="entry name" value="ATPase_alpha/beta_chains"/>
</dbReference>
<dbReference type="InterPro" id="IPR004100">
    <property type="entry name" value="ATPase_F1/V1/A1_a/bsu_N"/>
</dbReference>
<dbReference type="InterPro" id="IPR036121">
    <property type="entry name" value="ATPase_F1/V1/A1_a/bsu_N_sf"/>
</dbReference>
<dbReference type="InterPro" id="IPR000194">
    <property type="entry name" value="ATPase_F1/V1/A1_a/bsu_nucl-bd"/>
</dbReference>
<dbReference type="InterPro" id="IPR024034">
    <property type="entry name" value="ATPase_F1/V1_b/a_C"/>
</dbReference>
<dbReference type="InterPro" id="IPR027417">
    <property type="entry name" value="P-loop_NTPase"/>
</dbReference>
<dbReference type="NCBIfam" id="TIGR01039">
    <property type="entry name" value="atpD"/>
    <property type="match status" value="1"/>
</dbReference>
<dbReference type="PANTHER" id="PTHR15184">
    <property type="entry name" value="ATP SYNTHASE"/>
    <property type="match status" value="1"/>
</dbReference>
<dbReference type="PANTHER" id="PTHR15184:SF71">
    <property type="entry name" value="ATP SYNTHASE SUBUNIT BETA, MITOCHONDRIAL"/>
    <property type="match status" value="1"/>
</dbReference>
<dbReference type="Pfam" id="PF00006">
    <property type="entry name" value="ATP-synt_ab"/>
    <property type="match status" value="1"/>
</dbReference>
<dbReference type="Pfam" id="PF02874">
    <property type="entry name" value="ATP-synt_ab_N"/>
    <property type="match status" value="1"/>
</dbReference>
<dbReference type="Pfam" id="PF22919">
    <property type="entry name" value="ATP-synt_VA_C"/>
    <property type="match status" value="1"/>
</dbReference>
<dbReference type="SMART" id="SM00382">
    <property type="entry name" value="AAA"/>
    <property type="match status" value="1"/>
</dbReference>
<dbReference type="SUPFAM" id="SSF47917">
    <property type="entry name" value="C-terminal domain of alpha and beta subunits of F1 ATP synthase"/>
    <property type="match status" value="1"/>
</dbReference>
<dbReference type="SUPFAM" id="SSF50615">
    <property type="entry name" value="N-terminal domain of alpha and beta subunits of F1 ATP synthase"/>
    <property type="match status" value="1"/>
</dbReference>
<dbReference type="SUPFAM" id="SSF52540">
    <property type="entry name" value="P-loop containing nucleoside triphosphate hydrolases"/>
    <property type="match status" value="1"/>
</dbReference>
<dbReference type="PROSITE" id="PS00152">
    <property type="entry name" value="ATPASE_ALPHA_BETA"/>
    <property type="match status" value="1"/>
</dbReference>
<sequence>MRINPTTSGLGVSTLVEKNQGRIAQIIGPVLDVAFPPGKMPNIYNSLVVKGRDTAGQEINVTCEVQQLLGNNRVRAVAMSATDGLTRGMEVIDTGAPLSVPVGGATLGRIFNVLGEPVDNLGPVDTRTTSPIHRAAPAFTQLDTKLSIFETGIKVVDLLAPYRRGGKIGLFGGAGVGKTVLIMELINNIAKAHGGVSVFGGVGERTREGNDLYMEMKESGVINEENIAESKVALVYGQMNEPPGARMRVGLTALTMAEYFRDVNEQDVLLFIDNIFRFVQAGSEVSALLGRMPSAVGYQPTLSTEMGSLQERITSTKEGSITSIQAVYVPADDLTDPAPATTFAHLDATTVLSRGLAAKGIYPAVDPLDSTSTMLQPRIVGEEHYETAQRVKQTLQRYKELQDIIAILGLDELSEEDRLTVARARKIERFLSQPFFVAEVFTGSPGKYVGLAETIRGFQLILSGELDSFPEQAFYLVGNIDEATAKAMNLEVESKLKK</sequence>
<keyword id="KW-0066">ATP synthesis</keyword>
<keyword id="KW-0067">ATP-binding</keyword>
<keyword id="KW-0139">CF(1)</keyword>
<keyword id="KW-0150">Chloroplast</keyword>
<keyword id="KW-0375">Hydrogen ion transport</keyword>
<keyword id="KW-0406">Ion transport</keyword>
<keyword id="KW-0472">Membrane</keyword>
<keyword id="KW-0547">Nucleotide-binding</keyword>
<keyword id="KW-0934">Plastid</keyword>
<keyword id="KW-0793">Thylakoid</keyword>
<keyword id="KW-1278">Translocase</keyword>
<keyword id="KW-0813">Transport</keyword>
<proteinExistence type="inferred from homology"/>
<comment type="function">
    <text evidence="1">Produces ATP from ADP in the presence of a proton gradient across the membrane. The catalytic sites are hosted primarily by the beta subunits.</text>
</comment>
<comment type="catalytic activity">
    <reaction evidence="1">
        <text>ATP + H2O + 4 H(+)(in) = ADP + phosphate + 5 H(+)(out)</text>
        <dbReference type="Rhea" id="RHEA:57720"/>
        <dbReference type="ChEBI" id="CHEBI:15377"/>
        <dbReference type="ChEBI" id="CHEBI:15378"/>
        <dbReference type="ChEBI" id="CHEBI:30616"/>
        <dbReference type="ChEBI" id="CHEBI:43474"/>
        <dbReference type="ChEBI" id="CHEBI:456216"/>
        <dbReference type="EC" id="7.1.2.2"/>
    </reaction>
</comment>
<comment type="subunit">
    <text evidence="1">F-type ATPases have 2 components, CF(1) - the catalytic core - and CF(0) - the membrane proton channel. CF(1) has five subunits: alpha(3), beta(3), gamma(1), delta(1), epsilon(1). CF(0) has four main subunits: a(1), b(1), b'(1) and c(9-12).</text>
</comment>
<comment type="subcellular location">
    <subcellularLocation>
        <location evidence="1">Plastid</location>
        <location evidence="1">Chloroplast thylakoid membrane</location>
        <topology evidence="1">Peripheral membrane protein</topology>
    </subcellularLocation>
</comment>
<comment type="similarity">
    <text evidence="1">Belongs to the ATPase alpha/beta chains family.</text>
</comment>
<organism>
    <name type="scientific">Nymphaea alba</name>
    <name type="common">White water-lily</name>
    <name type="synonym">Castalia alba</name>
    <dbReference type="NCBI Taxonomy" id="34301"/>
    <lineage>
        <taxon>Eukaryota</taxon>
        <taxon>Viridiplantae</taxon>
        <taxon>Streptophyta</taxon>
        <taxon>Embryophyta</taxon>
        <taxon>Tracheophyta</taxon>
        <taxon>Spermatophyta</taxon>
        <taxon>Magnoliopsida</taxon>
        <taxon>Nymphaeales</taxon>
        <taxon>Nymphaeaceae</taxon>
        <taxon>Nymphaea</taxon>
    </lineage>
</organism>